<dbReference type="EC" id="2.1.1.355" evidence="6"/>
<dbReference type="EMBL" id="BX284604">
    <property type="protein sequence ID" value="CAB63382.3"/>
    <property type="molecule type" value="Genomic_DNA"/>
</dbReference>
<dbReference type="RefSeq" id="NP_001370101.1">
    <property type="nucleotide sequence ID" value="NM_001383260.2"/>
</dbReference>
<dbReference type="RefSeq" id="NP_502971.3">
    <property type="nucleotide sequence ID" value="NM_070570.3"/>
</dbReference>
<dbReference type="FunCoup" id="Q9U263">
    <property type="interactions" value="1626"/>
</dbReference>
<dbReference type="STRING" id="6239.Y51H4A.12.1"/>
<dbReference type="PaxDb" id="6239-Y51H4A.12"/>
<dbReference type="PeptideAtlas" id="Q9U263"/>
<dbReference type="EnsemblMetazoa" id="Y51H4A.12.1">
    <property type="protein sequence ID" value="Y51H4A.12.1"/>
    <property type="gene ID" value="WBGene00013106"/>
</dbReference>
<dbReference type="GeneID" id="178463"/>
<dbReference type="UCSC" id="Y51H4A.12">
    <property type="organism name" value="c. elegans"/>
</dbReference>
<dbReference type="AGR" id="WB:WBGene00013106"/>
<dbReference type="WormBase" id="Y51H4A.12">
    <property type="protein sequence ID" value="CE25361"/>
    <property type="gene ID" value="WBGene00013106"/>
    <property type="gene designation" value="set-26"/>
</dbReference>
<dbReference type="eggNOG" id="KOG1844">
    <property type="taxonomic scope" value="Eukaryota"/>
</dbReference>
<dbReference type="GeneTree" id="ENSGT00940000168747"/>
<dbReference type="HOGENOM" id="CLU_243457_0_0_1"/>
<dbReference type="InParanoid" id="Q9U263"/>
<dbReference type="OMA" id="IHPQEGP"/>
<dbReference type="OrthoDB" id="5877798at2759"/>
<dbReference type="PRO" id="PR:Q9U263"/>
<dbReference type="Proteomes" id="UP000001940">
    <property type="component" value="Chromosome IV"/>
</dbReference>
<dbReference type="Bgee" id="WBGene00013106">
    <property type="expression patterns" value="Expressed in pharyngeal muscle cell (C elegans) and 10 other cell types or tissues"/>
</dbReference>
<dbReference type="GO" id="GO:0005634">
    <property type="term" value="C:nucleus"/>
    <property type="evidence" value="ECO:0000318"/>
    <property type="project" value="GO_Central"/>
</dbReference>
<dbReference type="GO" id="GO:0046974">
    <property type="term" value="F:histone H3K9 methyltransferase activity"/>
    <property type="evidence" value="ECO:0000314"/>
    <property type="project" value="WormBase"/>
</dbReference>
<dbReference type="GO" id="GO:0140949">
    <property type="term" value="F:histone H3K9 trimethyltransferase activity"/>
    <property type="evidence" value="ECO:0007669"/>
    <property type="project" value="UniProtKB-EC"/>
</dbReference>
<dbReference type="GO" id="GO:0008270">
    <property type="term" value="F:zinc ion binding"/>
    <property type="evidence" value="ECO:0007669"/>
    <property type="project" value="UniProtKB-KW"/>
</dbReference>
<dbReference type="GO" id="GO:0032259">
    <property type="term" value="P:methylation"/>
    <property type="evidence" value="ECO:0007669"/>
    <property type="project" value="UniProtKB-KW"/>
</dbReference>
<dbReference type="CDD" id="cd15570">
    <property type="entry name" value="PHD_Bye1p_SIZ1_like"/>
    <property type="match status" value="1"/>
</dbReference>
<dbReference type="CDD" id="cd10529">
    <property type="entry name" value="SET_SETD5-like"/>
    <property type="match status" value="1"/>
</dbReference>
<dbReference type="FunFam" id="2.170.270.10:FF:000096">
    <property type="entry name" value="Histone-lysine N-methyltransferase set-26"/>
    <property type="match status" value="1"/>
</dbReference>
<dbReference type="Gene3D" id="2.170.270.10">
    <property type="entry name" value="SET domain"/>
    <property type="match status" value="1"/>
</dbReference>
<dbReference type="Gene3D" id="3.30.40.10">
    <property type="entry name" value="Zinc/RING finger domain, C3HC4 (zinc finger)"/>
    <property type="match status" value="1"/>
</dbReference>
<dbReference type="InterPro" id="IPR001214">
    <property type="entry name" value="SET_dom"/>
</dbReference>
<dbReference type="InterPro" id="IPR046341">
    <property type="entry name" value="SET_dom_sf"/>
</dbReference>
<dbReference type="InterPro" id="IPR019786">
    <property type="entry name" value="Zinc_finger_PHD-type_CS"/>
</dbReference>
<dbReference type="InterPro" id="IPR011011">
    <property type="entry name" value="Znf_FYVE_PHD"/>
</dbReference>
<dbReference type="InterPro" id="IPR001965">
    <property type="entry name" value="Znf_PHD"/>
</dbReference>
<dbReference type="InterPro" id="IPR013083">
    <property type="entry name" value="Znf_RING/FYVE/PHD"/>
</dbReference>
<dbReference type="PANTHER" id="PTHR14571">
    <property type="entry name" value="HISTONE-LYSINE N-METHYLTRANSFERASE SET-26-RELATED"/>
    <property type="match status" value="1"/>
</dbReference>
<dbReference type="PANTHER" id="PTHR14571:SF9">
    <property type="entry name" value="HISTONE-LYSINE N-METHYLTRANSFERASE SET-26-RELATED"/>
    <property type="match status" value="1"/>
</dbReference>
<dbReference type="Pfam" id="PF20826">
    <property type="entry name" value="PHD_5"/>
    <property type="match status" value="1"/>
</dbReference>
<dbReference type="Pfam" id="PF00856">
    <property type="entry name" value="SET"/>
    <property type="match status" value="1"/>
</dbReference>
<dbReference type="SMART" id="SM00249">
    <property type="entry name" value="PHD"/>
    <property type="match status" value="1"/>
</dbReference>
<dbReference type="SMART" id="SM00317">
    <property type="entry name" value="SET"/>
    <property type="match status" value="1"/>
</dbReference>
<dbReference type="SUPFAM" id="SSF57903">
    <property type="entry name" value="FYVE/PHD zinc finger"/>
    <property type="match status" value="1"/>
</dbReference>
<dbReference type="SUPFAM" id="SSF82199">
    <property type="entry name" value="SET domain"/>
    <property type="match status" value="1"/>
</dbReference>
<dbReference type="PROSITE" id="PS01359">
    <property type="entry name" value="ZF_PHD_1"/>
    <property type="match status" value="1"/>
</dbReference>
<reference evidence="10" key="1">
    <citation type="journal article" date="1998" name="Science">
        <title>Genome sequence of the nematode C. elegans: a platform for investigating biology.</title>
        <authorList>
            <consortium name="The C. elegans sequencing consortium"/>
        </authorList>
    </citation>
    <scope>NUCLEOTIDE SEQUENCE [LARGE SCALE GENOMIC DNA]</scope>
    <source>
        <strain evidence="10">Bristol N2</strain>
    </source>
</reference>
<reference evidence="9" key="2">
    <citation type="journal article" date="2012" name="Aging Cell">
        <title>Two SET domain containing genes link epigenetic changes and aging in Caenorhabditis elegans.</title>
        <authorList>
            <person name="Ni Z."/>
            <person name="Ebata A."/>
            <person name="Alipanahiramandi E."/>
            <person name="Lee S.S."/>
        </authorList>
    </citation>
    <scope>FUNCTION</scope>
    <scope>SUBCELLULAR LOCATION</scope>
    <scope>TISSUE SPECIFICITY</scope>
    <scope>DISRUPTION PHENOTYPE</scope>
</reference>
<reference evidence="9" key="3">
    <citation type="journal article" date="2014" name="Cell Rep.">
        <title>A histone methylation network regulates transgenerational epigenetic memory in C. elegans.</title>
        <authorList>
            <person name="Greer E.L."/>
            <person name="Beese-Sims S.E."/>
            <person name="Brookes E."/>
            <person name="Spadafora R."/>
            <person name="Zhu Y."/>
            <person name="Rothbart S.B."/>
            <person name="Aristizabal-Corrales D."/>
            <person name="Chen S."/>
            <person name="Badeaux A.I."/>
            <person name="Jin Q."/>
            <person name="Wang W."/>
            <person name="Strahl B.D."/>
            <person name="Colaiacovo M.P."/>
            <person name="Shi Y."/>
        </authorList>
    </citation>
    <scope>FUNCTION</scope>
    <scope>CATALYTIC ACTIVITY</scope>
    <scope>DISRUPTION PHENOTYPE</scope>
</reference>
<reference key="4">
    <citation type="journal article" date="2018" name="Elife">
        <title>SET-9 and SET-26 are H3K4me3 readers and play critical roles in germline development and longevity.</title>
        <authorList>
            <person name="Wang W."/>
            <person name="Chaturbedi A."/>
            <person name="Wang M."/>
            <person name="An S."/>
            <person name="Santhi S."/>
            <person name="Lee S.S."/>
        </authorList>
    </citation>
    <scope>FUNCTION</scope>
    <scope>SUBCELLULAR LOCATION</scope>
    <scope>TISSUE SPECIFICITY</scope>
    <scope>DOMAIN</scope>
    <scope>DISRUPTION PHENOTYPE</scope>
</reference>
<accession>Q9U263</accession>
<keyword id="KW-0175">Coiled coil</keyword>
<keyword id="KW-0479">Metal-binding</keyword>
<keyword id="KW-0489">Methyltransferase</keyword>
<keyword id="KW-0539">Nucleus</keyword>
<keyword id="KW-1185">Reference proteome</keyword>
<keyword id="KW-0949">S-adenosyl-L-methionine</keyword>
<keyword id="KW-0808">Transferase</keyword>
<keyword id="KW-0862">Zinc</keyword>
<keyword id="KW-0863">Zinc-finger</keyword>
<comment type="function">
    <text evidence="5 6 7">Histone methyltransferase that mediates trimethylation of 'Lys-9' of histone H3 in vitro (PubMed:24685137). Involved in transcriptional regulation (PubMed:29714684). Plays a role in the negative regulation of lifespan and in heat resistance (PubMed:29714684). Together with set-9, negatively regulates lifespan in a germline-independent, partially daf-16-dependent fashion (PubMed:22212395, PubMed:29714684). Together with set-9, plays a role in germline development and maintenance and might play a role in the restriction of the trimethylation mark on histone H3 'Lys-4'(H3K4me3) to target genes specifically in the germline (PubMed:29714684). Together with spr-5, required for transgenerational fertility (PubMed:24685137).</text>
</comment>
<comment type="catalytic activity">
    <reaction evidence="6">
        <text>L-lysyl(9)-[histone H3] + 3 S-adenosyl-L-methionine = N(6),N(6),N(6)-trimethyl-L-lysyl(9)-[histone H3] + 3 S-adenosyl-L-homocysteine + 3 H(+)</text>
        <dbReference type="Rhea" id="RHEA:60276"/>
        <dbReference type="Rhea" id="RHEA-COMP:15538"/>
        <dbReference type="Rhea" id="RHEA-COMP:15546"/>
        <dbReference type="ChEBI" id="CHEBI:15378"/>
        <dbReference type="ChEBI" id="CHEBI:29969"/>
        <dbReference type="ChEBI" id="CHEBI:57856"/>
        <dbReference type="ChEBI" id="CHEBI:59789"/>
        <dbReference type="ChEBI" id="CHEBI:61961"/>
        <dbReference type="EC" id="2.1.1.355"/>
    </reaction>
</comment>
<comment type="subcellular location">
    <subcellularLocation>
        <location evidence="5 7">Nucleus</location>
    </subcellularLocation>
</comment>
<comment type="tissue specificity">
    <text evidence="5 7">Expressed both in the germline and in somatic tissues.</text>
</comment>
<comment type="domain">
    <text evidence="7">The PHD-type domain binds histone H3 when trimethylated at 'Lys-4' (H3K4me3) in combination with a nearby acetylation (K9ac, K14ac and/or K18ac), but not H3K4me3 alone.</text>
</comment>
<comment type="disruption phenotype">
    <text evidence="5 6 7">Exhibits prolonged lifespan, increased resistance to heat stress, reduced brood size and changes in gene expression (PubMed:29714684). In a glp-1(e2141) mutant background which lacks a germline, extended lifespan, increased H3 protein levels, decreased levels of trimethylated histone H3 'Lys-9' (H3K9me3) and 'Lys-27' (H3K27me3) and changes in gene expression (PubMed:22212395, PubMed:29714684). In spr-5 null mutants, accelerates the progressive sterility and accumulation of histone H3 'Lys-4' dimethylation (H3K4me2) over generations which is seen in spr-5 mutants (PubMed:24685137). Simultaneous RNAi-mediated knockdown of set-26 and set-9 results in extended lifespan (PubMed:22212395).</text>
</comment>
<comment type="similarity">
    <text evidence="9">Belongs to the class V-like SAM-binding methyltransferase superfamily.</text>
</comment>
<comment type="caution">
    <text evidence="6 8">Contrary to other SET-domain containing methyltransferases, set-26 does not have the residues usually involved in cofactor binding: instead of the highly conserved XGXG, Y and NH motifs, set-26 displays AVEA (Ala-948-Ala-951), V (Val-967) and F (Phe-1063) and RR (Arg-1024-Arg-1025) motifs (PubMed:29714684). However, histone methyltransferase activity has been detected in vitro (PubMed:24685137).</text>
</comment>
<evidence type="ECO:0000255" key="1"/>
<evidence type="ECO:0000255" key="2">
    <source>
        <dbReference type="PROSITE-ProRule" id="PRU00146"/>
    </source>
</evidence>
<evidence type="ECO:0000255" key="3">
    <source>
        <dbReference type="PROSITE-ProRule" id="PRU00190"/>
    </source>
</evidence>
<evidence type="ECO:0000256" key="4">
    <source>
        <dbReference type="SAM" id="MobiDB-lite"/>
    </source>
</evidence>
<evidence type="ECO:0000269" key="5">
    <source>
    </source>
</evidence>
<evidence type="ECO:0000269" key="6">
    <source>
    </source>
</evidence>
<evidence type="ECO:0000269" key="7">
    <source>
    </source>
</evidence>
<evidence type="ECO:0000303" key="8">
    <source>
    </source>
</evidence>
<evidence type="ECO:0000305" key="9"/>
<evidence type="ECO:0000312" key="10">
    <source>
        <dbReference type="Proteomes" id="UP000001940"/>
    </source>
</evidence>
<evidence type="ECO:0000312" key="11">
    <source>
        <dbReference type="WormBase" id="Y51H4A.12"/>
    </source>
</evidence>
<sequence length="1645" mass="181666">MADGEHTLPADEELFEQPPLQQQQPEIAEPIVMAQEPIQGVSEDPQASEATHEAPDNYPVDHQMENQEFYQEPQIPEPQQIPQIPVFQPAAYNPPNYVAPQQRANNFGEPAAAADSRPLTEEEQLAAERPTEDTVWIDSDDDTDVEEAILRANFWLPYSDHNYDPPDPADRIILPTEGPFPCIAGLDEDCNIVKQWMPEDAVGPGSPGTQYRRNQQTGGGLPSTSVAPQQQQLPVRHNIQNRPMVAAQPFSIGGNQVEYGGIGGMDSRMQQRGVVRDGPQYRVMNDFGNGLPMRGQLPPRNSPAANAINRVREQQQQMYHQAGARGSLQQRVPAPAAPTPGSYQHIVNAVPVGGANPMRRVPPQARPGMIGGAANNNRARPIHVTRPMDTQEFEHPVAPAAAAPPRRVVDVAPHRMTPEQRQELQQMNRQRAAPQFPAAAAQRSAEKIVIQQRPGASSSRAPRPSMAQEDLLRSPTRRLSERVPQEHQTPVLEPRRFQVKVTDTYSTPIPKASDQLPAQLTEEDPPEESAAAAAPEDVPDAAPEDPPKGILKPTPPHRMTQEEKNAHFARLTTDKEKPTSSASILPQDAAPPHVPPPPPPPLVLRPHHQDETLAMVQSVFESKPRQPDTPKDKEAISKIADLLRFSADEFTGQSGSSAAARQRTVSGSAARAQTYQMHHQQQQQHHHQMPMDQRKRHSSGRYDALMGAMPLQQQPPPPPPSQFQHTDSIAHRPRGRPKGTRHPSVAVQPQRSGGARTLPPRAQTVAMSARNGANAKNSDSESEGIDEAAEESWTMRCHCGMDHGDGDTIECEGCKTWQHMACMGLTLKSNTSKYKCEMCLPRRLPVSKAEAAREQERILNRLRAAAKKQKRKSEPVEQKQKSQPSTSRKSAPMALQQQPAEPRVAQLNDYSKQASALLFGMEQTAGADTLLAESRLHKKARRMFVEEAVEALVTTDLVQIRQVILEVNGHVSMSNEVKRQPGGGNCIFMYDGLMKGTAGEDMGDGQELVCIDTKRKGNDTKFTRRSCVPNCVLKHVLGSNATLGIMIVATKDITRNTEVTLPFDADWRESEVELECAEHMKELQACPFESERRRFAAERHRAMDHKKREAEEARRADEERRRLEEEVRRERAAKTKQMDEAEKARLEAEKAAEKEKKAKEREEAKERKKMEVEASAAAAPESSNSITAREERRIQQAEEMFRRQEEEGKRKEARRRSKSVTPGVLEAAGTAAREDAPEASIPAPAPSPPASRRSVSRTTQPSTSSFATPTEPPAKNKRMRSVVPPKSEPASSAKRVRATTVATPKDTTASNDSRKRKSSATGKTPVAKRSKNVVPTSFGLALIEKELREQARDSTVLEMILPDYIMKEKRSGLLAGQSPDFSEVRAQIEEENRMKERFTKREAKKKAVEKAKEKEKKEHRKEPKKANEPGPAPKSEKAVEKAVEKVEKKPKSPQKPPAKPTAQKPPLKKTEEVDGIEREASESSSKESSVAPEEKKNPKKITFAEYNSRRSQKREAGECSTPPAVTRRGFIPSTEGEDLVNVELSAIPLDDHPSSSNTAPTTTIAPSVGGAPKPTSVVVKSPSTRSRTRGAASESVDDAPAEHSMSLQDRVFSMFGSTVDAPAPPPPPPASAETNSRRSRSTRWN</sequence>
<feature type="chain" id="PRO_0000438927" description="Histone-lysine N-methyltransferase set-26">
    <location>
        <begin position="1"/>
        <end position="1645"/>
    </location>
</feature>
<feature type="domain" description="SET" evidence="3">
    <location>
        <begin position="973"/>
        <end position="1064"/>
    </location>
</feature>
<feature type="zinc finger region" description="PHD-type" evidence="2">
    <location>
        <begin position="794"/>
        <end position="842"/>
    </location>
</feature>
<feature type="region of interest" description="Disordered" evidence="4">
    <location>
        <begin position="1"/>
        <end position="82"/>
    </location>
</feature>
<feature type="region of interest" description="Disordered" evidence="4">
    <location>
        <begin position="109"/>
        <end position="132"/>
    </location>
</feature>
<feature type="region of interest" description="Disordered" evidence="4">
    <location>
        <begin position="200"/>
        <end position="228"/>
    </location>
</feature>
<feature type="region of interest" description="Disordered" evidence="4">
    <location>
        <begin position="417"/>
        <end position="606"/>
    </location>
</feature>
<feature type="region of interest" description="Disordered" evidence="4">
    <location>
        <begin position="651"/>
        <end position="789"/>
    </location>
</feature>
<feature type="region of interest" description="Disordered" evidence="4">
    <location>
        <begin position="865"/>
        <end position="904"/>
    </location>
</feature>
<feature type="region of interest" description="Disordered" evidence="4">
    <location>
        <begin position="1099"/>
        <end position="1333"/>
    </location>
</feature>
<feature type="region of interest" description="Disordered" evidence="4">
    <location>
        <begin position="1371"/>
        <end position="1536"/>
    </location>
</feature>
<feature type="region of interest" description="Disordered" evidence="4">
    <location>
        <begin position="1548"/>
        <end position="1645"/>
    </location>
</feature>
<feature type="coiled-coil region" evidence="1">
    <location>
        <begin position="1103"/>
        <end position="1217"/>
    </location>
</feature>
<feature type="compositionally biased region" description="Low complexity" evidence="4">
    <location>
        <begin position="16"/>
        <end position="31"/>
    </location>
</feature>
<feature type="compositionally biased region" description="Low complexity" evidence="4">
    <location>
        <begin position="67"/>
        <end position="82"/>
    </location>
</feature>
<feature type="compositionally biased region" description="Polar residues" evidence="4">
    <location>
        <begin position="207"/>
        <end position="228"/>
    </location>
</feature>
<feature type="compositionally biased region" description="Low complexity" evidence="4">
    <location>
        <begin position="429"/>
        <end position="443"/>
    </location>
</feature>
<feature type="compositionally biased region" description="Low complexity" evidence="4">
    <location>
        <begin position="453"/>
        <end position="467"/>
    </location>
</feature>
<feature type="compositionally biased region" description="Basic and acidic residues" evidence="4">
    <location>
        <begin position="559"/>
        <end position="578"/>
    </location>
</feature>
<feature type="compositionally biased region" description="Pro residues" evidence="4">
    <location>
        <begin position="592"/>
        <end position="603"/>
    </location>
</feature>
<feature type="compositionally biased region" description="Polar residues" evidence="4">
    <location>
        <begin position="651"/>
        <end position="675"/>
    </location>
</feature>
<feature type="compositionally biased region" description="Basic residues" evidence="4">
    <location>
        <begin position="684"/>
        <end position="699"/>
    </location>
</feature>
<feature type="compositionally biased region" description="Basic residues" evidence="4">
    <location>
        <begin position="731"/>
        <end position="741"/>
    </location>
</feature>
<feature type="compositionally biased region" description="Acidic residues" evidence="4">
    <location>
        <begin position="780"/>
        <end position="789"/>
    </location>
</feature>
<feature type="compositionally biased region" description="Polar residues" evidence="4">
    <location>
        <begin position="881"/>
        <end position="899"/>
    </location>
</feature>
<feature type="compositionally biased region" description="Basic and acidic residues" evidence="4">
    <location>
        <begin position="1099"/>
        <end position="1172"/>
    </location>
</feature>
<feature type="compositionally biased region" description="Low complexity" evidence="4">
    <location>
        <begin position="1173"/>
        <end position="1183"/>
    </location>
</feature>
<feature type="compositionally biased region" description="Basic and acidic residues" evidence="4">
    <location>
        <begin position="1188"/>
        <end position="1210"/>
    </location>
</feature>
<feature type="compositionally biased region" description="Polar residues" evidence="4">
    <location>
        <begin position="1258"/>
        <end position="1268"/>
    </location>
</feature>
<feature type="compositionally biased region" description="Polar residues" evidence="4">
    <location>
        <begin position="1300"/>
        <end position="1311"/>
    </location>
</feature>
<feature type="compositionally biased region" description="Basic and acidic residues" evidence="4">
    <location>
        <begin position="1382"/>
        <end position="1427"/>
    </location>
</feature>
<feature type="compositionally biased region" description="Basic and acidic residues" evidence="4">
    <location>
        <begin position="1434"/>
        <end position="1450"/>
    </location>
</feature>
<feature type="compositionally biased region" description="Basic and acidic residues" evidence="4">
    <location>
        <begin position="1468"/>
        <end position="1485"/>
    </location>
</feature>
<feature type="compositionally biased region" description="Polar residues" evidence="4">
    <location>
        <begin position="1554"/>
        <end position="1565"/>
    </location>
</feature>
<protein>
    <recommendedName>
        <fullName evidence="9">Histone-lysine N-methyltransferase set-26</fullName>
        <ecNumber evidence="6">2.1.1.355</ecNumber>
    </recommendedName>
</protein>
<proteinExistence type="evidence at protein level"/>
<name>SET26_CAEEL</name>
<gene>
    <name evidence="11" type="primary">set-26</name>
    <name evidence="11" type="ORF">Y51H4A.12</name>
</gene>
<organism evidence="10">
    <name type="scientific">Caenorhabditis elegans</name>
    <dbReference type="NCBI Taxonomy" id="6239"/>
    <lineage>
        <taxon>Eukaryota</taxon>
        <taxon>Metazoa</taxon>
        <taxon>Ecdysozoa</taxon>
        <taxon>Nematoda</taxon>
        <taxon>Chromadorea</taxon>
        <taxon>Rhabditida</taxon>
        <taxon>Rhabditina</taxon>
        <taxon>Rhabditomorpha</taxon>
        <taxon>Rhabditoidea</taxon>
        <taxon>Rhabditidae</taxon>
        <taxon>Peloderinae</taxon>
        <taxon>Caenorhabditis</taxon>
    </lineage>
</organism>